<keyword id="KW-0004">4Fe-4S</keyword>
<keyword id="KW-0963">Cytoplasm</keyword>
<keyword id="KW-0408">Iron</keyword>
<keyword id="KW-0411">Iron-sulfur</keyword>
<keyword id="KW-0479">Metal-binding</keyword>
<keyword id="KW-0662">Pyridine nucleotide biosynthesis</keyword>
<keyword id="KW-1185">Reference proteome</keyword>
<keyword id="KW-0808">Transferase</keyword>
<protein>
    <recommendedName>
        <fullName evidence="1">Quinolinate synthase</fullName>
        <ecNumber evidence="1">2.5.1.72</ecNumber>
    </recommendedName>
</protein>
<sequence length="352" mass="38418">MTHISERLLVQAHLAAKQPRVLSEQESAEHRAAIAAELKAQNAVLVAHYYCDPVIQALAEETGGCVSDSLEMARFGNQHPAQTVVVAGVRFMGETAKILNPEKRVLMPTLEATCSLDLGCPVDEFSAFCDQHPERTVVVYANTSAAVKARADWVVTSSCAVEIVEHLMDNGEPILWAPDQHLGRYIQRETGADMLLWDGACIVHEEFKAKQLEDMKALYPDAAILVHPESPESVVALADAVGSTSQLIKAAQTLPNKTFIVATDRGIFYKMQQLCPDKDFIEAPTAGNGAACRSCAHCPWMAMNTLERTLACLREGSGEIFVDPALIPRAVRPLKRMLDFTQAARLRQAGNA</sequence>
<organism>
    <name type="scientific">Pseudomonas aeruginosa (strain ATCC 15692 / DSM 22644 / CIP 104116 / JCM 14847 / LMG 12228 / 1C / PRS 101 / PAO1)</name>
    <dbReference type="NCBI Taxonomy" id="208964"/>
    <lineage>
        <taxon>Bacteria</taxon>
        <taxon>Pseudomonadati</taxon>
        <taxon>Pseudomonadota</taxon>
        <taxon>Gammaproteobacteria</taxon>
        <taxon>Pseudomonadales</taxon>
        <taxon>Pseudomonadaceae</taxon>
        <taxon>Pseudomonas</taxon>
    </lineage>
</organism>
<reference key="1">
    <citation type="journal article" date="2000" name="Nature">
        <title>Complete genome sequence of Pseudomonas aeruginosa PAO1, an opportunistic pathogen.</title>
        <authorList>
            <person name="Stover C.K."/>
            <person name="Pham X.-Q.T."/>
            <person name="Erwin A.L."/>
            <person name="Mizoguchi S.D."/>
            <person name="Warrener P."/>
            <person name="Hickey M.J."/>
            <person name="Brinkman F.S.L."/>
            <person name="Hufnagle W.O."/>
            <person name="Kowalik D.J."/>
            <person name="Lagrou M."/>
            <person name="Garber R.L."/>
            <person name="Goltry L."/>
            <person name="Tolentino E."/>
            <person name="Westbrock-Wadman S."/>
            <person name="Yuan Y."/>
            <person name="Brody L.L."/>
            <person name="Coulter S.N."/>
            <person name="Folger K.R."/>
            <person name="Kas A."/>
            <person name="Larbig K."/>
            <person name="Lim R.M."/>
            <person name="Smith K.A."/>
            <person name="Spencer D.H."/>
            <person name="Wong G.K.-S."/>
            <person name="Wu Z."/>
            <person name="Paulsen I.T."/>
            <person name="Reizer J."/>
            <person name="Saier M.H. Jr."/>
            <person name="Hancock R.E.W."/>
            <person name="Lory S."/>
            <person name="Olson M.V."/>
        </authorList>
    </citation>
    <scope>NUCLEOTIDE SEQUENCE [LARGE SCALE GENOMIC DNA]</scope>
    <source>
        <strain>ATCC 15692 / DSM 22644 / CIP 104116 / JCM 14847 / LMG 12228 / 1C / PRS 101 / PAO1</strain>
    </source>
</reference>
<dbReference type="EC" id="2.5.1.72" evidence="1"/>
<dbReference type="EMBL" id="AE004091">
    <property type="protein sequence ID" value="AAG04393.1"/>
    <property type="molecule type" value="Genomic_DNA"/>
</dbReference>
<dbReference type="PIR" id="E83519">
    <property type="entry name" value="E83519"/>
</dbReference>
<dbReference type="RefSeq" id="NP_249695.1">
    <property type="nucleotide sequence ID" value="NC_002516.2"/>
</dbReference>
<dbReference type="RefSeq" id="WP_003112547.1">
    <property type="nucleotide sequence ID" value="NZ_QZGE01000006.1"/>
</dbReference>
<dbReference type="SMR" id="Q9I4W9"/>
<dbReference type="FunCoup" id="Q9I4W9">
    <property type="interactions" value="550"/>
</dbReference>
<dbReference type="STRING" id="208964.PA1004"/>
<dbReference type="PaxDb" id="208964-PA1004"/>
<dbReference type="GeneID" id="883095"/>
<dbReference type="KEGG" id="pae:PA1004"/>
<dbReference type="PATRIC" id="fig|208964.12.peg.1036"/>
<dbReference type="PseudoCAP" id="PA1004"/>
<dbReference type="HOGENOM" id="CLU_047382_1_0_6"/>
<dbReference type="InParanoid" id="Q9I4W9"/>
<dbReference type="OrthoDB" id="9801204at2"/>
<dbReference type="PhylomeDB" id="Q9I4W9"/>
<dbReference type="BioCyc" id="PAER208964:G1FZ6-1023-MONOMER"/>
<dbReference type="UniPathway" id="UPA00253">
    <property type="reaction ID" value="UER00327"/>
</dbReference>
<dbReference type="Proteomes" id="UP000002438">
    <property type="component" value="Chromosome"/>
</dbReference>
<dbReference type="GO" id="GO:0005829">
    <property type="term" value="C:cytosol"/>
    <property type="evidence" value="ECO:0000318"/>
    <property type="project" value="GO_Central"/>
</dbReference>
<dbReference type="GO" id="GO:0051539">
    <property type="term" value="F:4 iron, 4 sulfur cluster binding"/>
    <property type="evidence" value="ECO:0000318"/>
    <property type="project" value="GO_Central"/>
</dbReference>
<dbReference type="GO" id="GO:0046872">
    <property type="term" value="F:metal ion binding"/>
    <property type="evidence" value="ECO:0007669"/>
    <property type="project" value="UniProtKB-KW"/>
</dbReference>
<dbReference type="GO" id="GO:0008987">
    <property type="term" value="F:quinolinate synthetase A activity"/>
    <property type="evidence" value="ECO:0000318"/>
    <property type="project" value="GO_Central"/>
</dbReference>
<dbReference type="GO" id="GO:0034628">
    <property type="term" value="P:'de novo' NAD biosynthetic process from L-aspartate"/>
    <property type="evidence" value="ECO:0000318"/>
    <property type="project" value="GO_Central"/>
</dbReference>
<dbReference type="FunFam" id="3.40.50.10800:FF:000001">
    <property type="entry name" value="Quinolinate synthase A"/>
    <property type="match status" value="1"/>
</dbReference>
<dbReference type="Gene3D" id="3.40.50.10800">
    <property type="entry name" value="NadA-like"/>
    <property type="match status" value="3"/>
</dbReference>
<dbReference type="HAMAP" id="MF_00567">
    <property type="entry name" value="NadA_type1"/>
    <property type="match status" value="1"/>
</dbReference>
<dbReference type="InterPro" id="IPR003473">
    <property type="entry name" value="NadA"/>
</dbReference>
<dbReference type="InterPro" id="IPR036094">
    <property type="entry name" value="NadA_sf"/>
</dbReference>
<dbReference type="InterPro" id="IPR023513">
    <property type="entry name" value="Quinolinate_synth_A_type1"/>
</dbReference>
<dbReference type="NCBIfam" id="TIGR00550">
    <property type="entry name" value="nadA"/>
    <property type="match status" value="1"/>
</dbReference>
<dbReference type="NCBIfam" id="NF006877">
    <property type="entry name" value="PRK09375.1-1"/>
    <property type="match status" value="1"/>
</dbReference>
<dbReference type="NCBIfam" id="NF006878">
    <property type="entry name" value="PRK09375.1-2"/>
    <property type="match status" value="1"/>
</dbReference>
<dbReference type="PANTHER" id="PTHR30573:SF0">
    <property type="entry name" value="QUINOLINATE SYNTHASE, CHLOROPLASTIC"/>
    <property type="match status" value="1"/>
</dbReference>
<dbReference type="PANTHER" id="PTHR30573">
    <property type="entry name" value="QUINOLINATE SYNTHETASE A"/>
    <property type="match status" value="1"/>
</dbReference>
<dbReference type="Pfam" id="PF02445">
    <property type="entry name" value="NadA"/>
    <property type="match status" value="1"/>
</dbReference>
<dbReference type="SUPFAM" id="SSF142754">
    <property type="entry name" value="NadA-like"/>
    <property type="match status" value="1"/>
</dbReference>
<gene>
    <name evidence="1" type="primary">nadA</name>
    <name type="ordered locus">PA1004</name>
</gene>
<feature type="chain" id="PRO_0000155766" description="Quinolinate synthase">
    <location>
        <begin position="1"/>
        <end position="352"/>
    </location>
</feature>
<feature type="binding site" evidence="1">
    <location>
        <position position="48"/>
    </location>
    <ligand>
        <name>iminosuccinate</name>
        <dbReference type="ChEBI" id="CHEBI:77875"/>
    </ligand>
</feature>
<feature type="binding site" evidence="1">
    <location>
        <position position="69"/>
    </location>
    <ligand>
        <name>iminosuccinate</name>
        <dbReference type="ChEBI" id="CHEBI:77875"/>
    </ligand>
</feature>
<feature type="binding site" evidence="1">
    <location>
        <position position="114"/>
    </location>
    <ligand>
        <name>[4Fe-4S] cluster</name>
        <dbReference type="ChEBI" id="CHEBI:49883"/>
    </ligand>
</feature>
<feature type="binding site" evidence="1">
    <location>
        <begin position="140"/>
        <end position="142"/>
    </location>
    <ligand>
        <name>iminosuccinate</name>
        <dbReference type="ChEBI" id="CHEBI:77875"/>
    </ligand>
</feature>
<feature type="binding site" evidence="1">
    <location>
        <position position="157"/>
    </location>
    <ligand>
        <name>iminosuccinate</name>
        <dbReference type="ChEBI" id="CHEBI:77875"/>
    </ligand>
</feature>
<feature type="binding site" evidence="1">
    <location>
        <position position="201"/>
    </location>
    <ligand>
        <name>[4Fe-4S] cluster</name>
        <dbReference type="ChEBI" id="CHEBI:49883"/>
    </ligand>
</feature>
<feature type="binding site" evidence="1">
    <location>
        <begin position="227"/>
        <end position="229"/>
    </location>
    <ligand>
        <name>iminosuccinate</name>
        <dbReference type="ChEBI" id="CHEBI:77875"/>
    </ligand>
</feature>
<feature type="binding site" evidence="1">
    <location>
        <position position="244"/>
    </location>
    <ligand>
        <name>iminosuccinate</name>
        <dbReference type="ChEBI" id="CHEBI:77875"/>
    </ligand>
</feature>
<feature type="binding site" evidence="1">
    <location>
        <position position="298"/>
    </location>
    <ligand>
        <name>[4Fe-4S] cluster</name>
        <dbReference type="ChEBI" id="CHEBI:49883"/>
    </ligand>
</feature>
<evidence type="ECO:0000255" key="1">
    <source>
        <dbReference type="HAMAP-Rule" id="MF_00567"/>
    </source>
</evidence>
<comment type="function">
    <text evidence="1">Catalyzes the condensation of iminoaspartate with dihydroxyacetone phosphate to form quinolinate.</text>
</comment>
<comment type="catalytic activity">
    <reaction evidence="1">
        <text>iminosuccinate + dihydroxyacetone phosphate = quinolinate + phosphate + 2 H2O + H(+)</text>
        <dbReference type="Rhea" id="RHEA:25888"/>
        <dbReference type="ChEBI" id="CHEBI:15377"/>
        <dbReference type="ChEBI" id="CHEBI:15378"/>
        <dbReference type="ChEBI" id="CHEBI:29959"/>
        <dbReference type="ChEBI" id="CHEBI:43474"/>
        <dbReference type="ChEBI" id="CHEBI:57642"/>
        <dbReference type="ChEBI" id="CHEBI:77875"/>
        <dbReference type="EC" id="2.5.1.72"/>
    </reaction>
    <physiologicalReaction direction="left-to-right" evidence="1">
        <dbReference type="Rhea" id="RHEA:25889"/>
    </physiologicalReaction>
</comment>
<comment type="cofactor">
    <cofactor evidence="1">
        <name>[4Fe-4S] cluster</name>
        <dbReference type="ChEBI" id="CHEBI:49883"/>
    </cofactor>
    <text evidence="1">Binds 1 [4Fe-4S] cluster per subunit.</text>
</comment>
<comment type="pathway">
    <text evidence="1">Cofactor biosynthesis; NAD(+) biosynthesis; quinolinate from iminoaspartate: step 1/1.</text>
</comment>
<comment type="subcellular location">
    <subcellularLocation>
        <location evidence="1">Cytoplasm</location>
    </subcellularLocation>
</comment>
<comment type="similarity">
    <text evidence="1">Belongs to the quinolinate synthase family. Type 1 subfamily.</text>
</comment>
<accession>Q9I4W9</accession>
<proteinExistence type="inferred from homology"/>
<name>NADA_PSEAE</name>